<proteinExistence type="inferred from homology"/>
<feature type="chain" id="PRO_0000398214" description="Lipoyl synthase, mitochondrial">
    <location>
        <begin position="1"/>
        <end position="393"/>
    </location>
</feature>
<feature type="domain" description="Radical SAM core" evidence="2">
    <location>
        <begin position="127"/>
        <end position="346"/>
    </location>
</feature>
<feature type="binding site" evidence="1">
    <location>
        <position position="111"/>
    </location>
    <ligand>
        <name>[4Fe-4S] cluster</name>
        <dbReference type="ChEBI" id="CHEBI:49883"/>
        <label>1</label>
    </ligand>
</feature>
<feature type="binding site" evidence="1">
    <location>
        <position position="116"/>
    </location>
    <ligand>
        <name>[4Fe-4S] cluster</name>
        <dbReference type="ChEBI" id="CHEBI:49883"/>
        <label>1</label>
    </ligand>
</feature>
<feature type="binding site" evidence="1">
    <location>
        <position position="122"/>
    </location>
    <ligand>
        <name>[4Fe-4S] cluster</name>
        <dbReference type="ChEBI" id="CHEBI:49883"/>
        <label>1</label>
    </ligand>
</feature>
<feature type="binding site" evidence="1">
    <location>
        <position position="142"/>
    </location>
    <ligand>
        <name>[4Fe-4S] cluster</name>
        <dbReference type="ChEBI" id="CHEBI:49883"/>
        <label>2</label>
        <note>4Fe-4S-S-AdoMet</note>
    </ligand>
</feature>
<feature type="binding site" evidence="1">
    <location>
        <position position="146"/>
    </location>
    <ligand>
        <name>[4Fe-4S] cluster</name>
        <dbReference type="ChEBI" id="CHEBI:49883"/>
        <label>2</label>
        <note>4Fe-4S-S-AdoMet</note>
    </ligand>
</feature>
<feature type="binding site" evidence="1">
    <location>
        <position position="149"/>
    </location>
    <ligand>
        <name>[4Fe-4S] cluster</name>
        <dbReference type="ChEBI" id="CHEBI:49883"/>
        <label>2</label>
        <note>4Fe-4S-S-AdoMet</note>
    </ligand>
</feature>
<feature type="binding site" evidence="1">
    <location>
        <position position="357"/>
    </location>
    <ligand>
        <name>[4Fe-4S] cluster</name>
        <dbReference type="ChEBI" id="CHEBI:49883"/>
        <label>1</label>
    </ligand>
</feature>
<dbReference type="EC" id="2.8.1.8" evidence="1"/>
<dbReference type="EMBL" id="CH477577">
    <property type="protein sequence ID" value="EAT38774.1"/>
    <property type="molecule type" value="Genomic_DNA"/>
</dbReference>
<dbReference type="SMR" id="Q16W22"/>
<dbReference type="FunCoup" id="Q16W22">
    <property type="interactions" value="1732"/>
</dbReference>
<dbReference type="STRING" id="7159.Q16W22"/>
<dbReference type="PaxDb" id="7159-AAEL009368-PA"/>
<dbReference type="EnsemblMetazoa" id="AAEL009368-RA">
    <property type="protein sequence ID" value="AAEL009368-PA"/>
    <property type="gene ID" value="AAEL009368"/>
</dbReference>
<dbReference type="GeneID" id="5571879"/>
<dbReference type="KEGG" id="aag:5571879"/>
<dbReference type="CTD" id="40259"/>
<dbReference type="VEuPathDB" id="VectorBase:AAEL009368"/>
<dbReference type="eggNOG" id="KOG2672">
    <property type="taxonomic scope" value="Eukaryota"/>
</dbReference>
<dbReference type="HOGENOM" id="CLU_033144_1_2_1"/>
<dbReference type="InParanoid" id="Q16W22"/>
<dbReference type="OMA" id="PYCDIDF"/>
<dbReference type="OrthoDB" id="3231at2759"/>
<dbReference type="PhylomeDB" id="Q16W22"/>
<dbReference type="UniPathway" id="UPA00538">
    <property type="reaction ID" value="UER00593"/>
</dbReference>
<dbReference type="Proteomes" id="UP000008820">
    <property type="component" value="Chromosome 3"/>
</dbReference>
<dbReference type="Proteomes" id="UP000682892">
    <property type="component" value="Unassembled WGS sequence"/>
</dbReference>
<dbReference type="GO" id="GO:0005739">
    <property type="term" value="C:mitochondrion"/>
    <property type="evidence" value="ECO:0007669"/>
    <property type="project" value="UniProtKB-SubCell"/>
</dbReference>
<dbReference type="GO" id="GO:0051539">
    <property type="term" value="F:4 iron, 4 sulfur cluster binding"/>
    <property type="evidence" value="ECO:0007669"/>
    <property type="project" value="UniProtKB-UniRule"/>
</dbReference>
<dbReference type="GO" id="GO:0016992">
    <property type="term" value="F:lipoate synthase activity"/>
    <property type="evidence" value="ECO:0007669"/>
    <property type="project" value="UniProtKB-UniRule"/>
</dbReference>
<dbReference type="GO" id="GO:0046872">
    <property type="term" value="F:metal ion binding"/>
    <property type="evidence" value="ECO:0007669"/>
    <property type="project" value="UniProtKB-KW"/>
</dbReference>
<dbReference type="CDD" id="cd01335">
    <property type="entry name" value="Radical_SAM"/>
    <property type="match status" value="1"/>
</dbReference>
<dbReference type="FunFam" id="3.20.20.70:FF:000036">
    <property type="entry name" value="Lipoyl synthase, mitochondrial"/>
    <property type="match status" value="1"/>
</dbReference>
<dbReference type="Gene3D" id="3.20.20.70">
    <property type="entry name" value="Aldolase class I"/>
    <property type="match status" value="1"/>
</dbReference>
<dbReference type="HAMAP" id="MF_00206">
    <property type="entry name" value="Lipoyl_synth"/>
    <property type="match status" value="1"/>
</dbReference>
<dbReference type="InterPro" id="IPR013785">
    <property type="entry name" value="Aldolase_TIM"/>
</dbReference>
<dbReference type="InterPro" id="IPR006638">
    <property type="entry name" value="Elp3/MiaA/NifB-like_rSAM"/>
</dbReference>
<dbReference type="InterPro" id="IPR031691">
    <property type="entry name" value="LIAS_N"/>
</dbReference>
<dbReference type="InterPro" id="IPR003698">
    <property type="entry name" value="Lipoyl_synth"/>
</dbReference>
<dbReference type="InterPro" id="IPR007197">
    <property type="entry name" value="rSAM"/>
</dbReference>
<dbReference type="NCBIfam" id="TIGR00510">
    <property type="entry name" value="lipA"/>
    <property type="match status" value="1"/>
</dbReference>
<dbReference type="NCBIfam" id="NF004019">
    <property type="entry name" value="PRK05481.1"/>
    <property type="match status" value="1"/>
</dbReference>
<dbReference type="NCBIfam" id="NF009544">
    <property type="entry name" value="PRK12928.1"/>
    <property type="match status" value="1"/>
</dbReference>
<dbReference type="PANTHER" id="PTHR10949">
    <property type="entry name" value="LIPOYL SYNTHASE"/>
    <property type="match status" value="1"/>
</dbReference>
<dbReference type="PANTHER" id="PTHR10949:SF0">
    <property type="entry name" value="LIPOYL SYNTHASE, MITOCHONDRIAL"/>
    <property type="match status" value="1"/>
</dbReference>
<dbReference type="Pfam" id="PF16881">
    <property type="entry name" value="LIAS_N"/>
    <property type="match status" value="1"/>
</dbReference>
<dbReference type="Pfam" id="PF04055">
    <property type="entry name" value="Radical_SAM"/>
    <property type="match status" value="1"/>
</dbReference>
<dbReference type="PIRSF" id="PIRSF005963">
    <property type="entry name" value="Lipoyl_synth"/>
    <property type="match status" value="1"/>
</dbReference>
<dbReference type="SFLD" id="SFLDF00271">
    <property type="entry name" value="lipoyl_synthase"/>
    <property type="match status" value="1"/>
</dbReference>
<dbReference type="SFLD" id="SFLDS00029">
    <property type="entry name" value="Radical_SAM"/>
    <property type="match status" value="1"/>
</dbReference>
<dbReference type="SMART" id="SM00729">
    <property type="entry name" value="Elp3"/>
    <property type="match status" value="1"/>
</dbReference>
<dbReference type="SUPFAM" id="SSF102114">
    <property type="entry name" value="Radical SAM enzymes"/>
    <property type="match status" value="1"/>
</dbReference>
<dbReference type="PROSITE" id="PS51918">
    <property type="entry name" value="RADICAL_SAM"/>
    <property type="match status" value="1"/>
</dbReference>
<reference key="1">
    <citation type="journal article" date="2007" name="Science">
        <title>Genome sequence of Aedes aegypti, a major arbovirus vector.</title>
        <authorList>
            <person name="Nene V."/>
            <person name="Wortman J.R."/>
            <person name="Lawson D."/>
            <person name="Haas B.J."/>
            <person name="Kodira C.D."/>
            <person name="Tu Z.J."/>
            <person name="Loftus B.J."/>
            <person name="Xi Z."/>
            <person name="Megy K."/>
            <person name="Grabherr M."/>
            <person name="Ren Q."/>
            <person name="Zdobnov E.M."/>
            <person name="Lobo N.F."/>
            <person name="Campbell K.S."/>
            <person name="Brown S.E."/>
            <person name="Bonaldo M.F."/>
            <person name="Zhu J."/>
            <person name="Sinkins S.P."/>
            <person name="Hogenkamp D.G."/>
            <person name="Amedeo P."/>
            <person name="Arensburger P."/>
            <person name="Atkinson P.W."/>
            <person name="Bidwell S.L."/>
            <person name="Biedler J."/>
            <person name="Birney E."/>
            <person name="Bruggner R.V."/>
            <person name="Costas J."/>
            <person name="Coy M.R."/>
            <person name="Crabtree J."/>
            <person name="Crawford M."/>
            <person name="DeBruyn B."/>
            <person name="DeCaprio D."/>
            <person name="Eiglmeier K."/>
            <person name="Eisenstadt E."/>
            <person name="El-Dorry H."/>
            <person name="Gelbart W.M."/>
            <person name="Gomes S.L."/>
            <person name="Hammond M."/>
            <person name="Hannick L.I."/>
            <person name="Hogan J.R."/>
            <person name="Holmes M.H."/>
            <person name="Jaffe D."/>
            <person name="Johnston S.J."/>
            <person name="Kennedy R.C."/>
            <person name="Koo H."/>
            <person name="Kravitz S."/>
            <person name="Kriventseva E.V."/>
            <person name="Kulp D."/>
            <person name="Labutti K."/>
            <person name="Lee E."/>
            <person name="Li S."/>
            <person name="Lovin D.D."/>
            <person name="Mao C."/>
            <person name="Mauceli E."/>
            <person name="Menck C.F."/>
            <person name="Miller J.R."/>
            <person name="Montgomery P."/>
            <person name="Mori A."/>
            <person name="Nascimento A.L."/>
            <person name="Naveira H.F."/>
            <person name="Nusbaum C."/>
            <person name="O'Leary S.B."/>
            <person name="Orvis J."/>
            <person name="Pertea M."/>
            <person name="Quesneville H."/>
            <person name="Reidenbach K.R."/>
            <person name="Rogers Y.-H.C."/>
            <person name="Roth C.W."/>
            <person name="Schneider J.R."/>
            <person name="Schatz M."/>
            <person name="Shumway M."/>
            <person name="Stanke M."/>
            <person name="Stinson E.O."/>
            <person name="Tubio J.M.C."/>
            <person name="Vanzee J.P."/>
            <person name="Verjovski-Almeida S."/>
            <person name="Werner D."/>
            <person name="White O.R."/>
            <person name="Wyder S."/>
            <person name="Zeng Q."/>
            <person name="Zhao Q."/>
            <person name="Zhao Y."/>
            <person name="Hill C.A."/>
            <person name="Raikhel A.S."/>
            <person name="Soares M.B."/>
            <person name="Knudson D.L."/>
            <person name="Lee N.H."/>
            <person name="Galagan J."/>
            <person name="Salzberg S.L."/>
            <person name="Paulsen I.T."/>
            <person name="Dimopoulos G."/>
            <person name="Collins F.H."/>
            <person name="Bruce B."/>
            <person name="Fraser-Liggett C.M."/>
            <person name="Severson D.W."/>
        </authorList>
    </citation>
    <scope>NUCLEOTIDE SEQUENCE [LARGE SCALE GENOMIC DNA]</scope>
    <source>
        <strain>LVPib12</strain>
    </source>
</reference>
<accession>Q16W22</accession>
<protein>
    <recommendedName>
        <fullName evidence="1">Lipoyl synthase, mitochondrial</fullName>
        <ecNumber evidence="1">2.8.1.8</ecNumber>
    </recommendedName>
    <alternativeName>
        <fullName evidence="1">Lipoate synthase</fullName>
        <shortName evidence="1">LS</shortName>
        <shortName evidence="1">Lip-syn</shortName>
    </alternativeName>
    <alternativeName>
        <fullName evidence="1">Lipoic acid synthase</fullName>
    </alternativeName>
</protein>
<evidence type="ECO:0000255" key="1">
    <source>
        <dbReference type="HAMAP-Rule" id="MF_03123"/>
    </source>
</evidence>
<evidence type="ECO:0000255" key="2">
    <source>
        <dbReference type="PROSITE-ProRule" id="PRU01266"/>
    </source>
</evidence>
<gene>
    <name type="ORF">AAEL009368</name>
</gene>
<keyword id="KW-0004">4Fe-4S</keyword>
<keyword id="KW-0408">Iron</keyword>
<keyword id="KW-0411">Iron-sulfur</keyword>
<keyword id="KW-0479">Metal-binding</keyword>
<keyword id="KW-0496">Mitochondrion</keyword>
<keyword id="KW-1185">Reference proteome</keyword>
<keyword id="KW-0949">S-adenosyl-L-methionine</keyword>
<keyword id="KW-0808">Transferase</keyword>
<name>LIAS_AEDAE</name>
<organism>
    <name type="scientific">Aedes aegypti</name>
    <name type="common">Yellowfever mosquito</name>
    <name type="synonym">Culex aegypti</name>
    <dbReference type="NCBI Taxonomy" id="7159"/>
    <lineage>
        <taxon>Eukaryota</taxon>
        <taxon>Metazoa</taxon>
        <taxon>Ecdysozoa</taxon>
        <taxon>Arthropoda</taxon>
        <taxon>Hexapoda</taxon>
        <taxon>Insecta</taxon>
        <taxon>Pterygota</taxon>
        <taxon>Neoptera</taxon>
        <taxon>Endopterygota</taxon>
        <taxon>Diptera</taxon>
        <taxon>Nematocera</taxon>
        <taxon>Culicoidea</taxon>
        <taxon>Culicidae</taxon>
        <taxon>Culicinae</taxon>
        <taxon>Aedini</taxon>
        <taxon>Aedes</taxon>
        <taxon>Stegomyia</taxon>
    </lineage>
</organism>
<comment type="function">
    <text evidence="1">Catalyzes the radical-mediated insertion of two sulfur atoms into the C-6 and C-8 positions of the octanoyl moiety bound to the lipoyl domains of lipoate-dependent enzymes, thereby converting the octanoylated domains into lipoylated derivatives.</text>
</comment>
<comment type="catalytic activity">
    <reaction evidence="1">
        <text>[[Fe-S] cluster scaffold protein carrying a second [4Fe-4S](2+) cluster] + N(6)-octanoyl-L-lysyl-[protein] + 2 oxidized [2Fe-2S]-[ferredoxin] + 2 S-adenosyl-L-methionine + 4 H(+) = [[Fe-S] cluster scaffold protein] + N(6)-[(R)-dihydrolipoyl]-L-lysyl-[protein] + 4 Fe(3+) + 2 hydrogen sulfide + 2 5'-deoxyadenosine + 2 L-methionine + 2 reduced [2Fe-2S]-[ferredoxin]</text>
        <dbReference type="Rhea" id="RHEA:16585"/>
        <dbReference type="Rhea" id="RHEA-COMP:9928"/>
        <dbReference type="Rhea" id="RHEA-COMP:10000"/>
        <dbReference type="Rhea" id="RHEA-COMP:10001"/>
        <dbReference type="Rhea" id="RHEA-COMP:10475"/>
        <dbReference type="Rhea" id="RHEA-COMP:14568"/>
        <dbReference type="Rhea" id="RHEA-COMP:14569"/>
        <dbReference type="ChEBI" id="CHEBI:15378"/>
        <dbReference type="ChEBI" id="CHEBI:17319"/>
        <dbReference type="ChEBI" id="CHEBI:29034"/>
        <dbReference type="ChEBI" id="CHEBI:29919"/>
        <dbReference type="ChEBI" id="CHEBI:33722"/>
        <dbReference type="ChEBI" id="CHEBI:33737"/>
        <dbReference type="ChEBI" id="CHEBI:33738"/>
        <dbReference type="ChEBI" id="CHEBI:57844"/>
        <dbReference type="ChEBI" id="CHEBI:59789"/>
        <dbReference type="ChEBI" id="CHEBI:78809"/>
        <dbReference type="ChEBI" id="CHEBI:83100"/>
        <dbReference type="EC" id="2.8.1.8"/>
    </reaction>
</comment>
<comment type="cofactor">
    <cofactor evidence="1">
        <name>[4Fe-4S] cluster</name>
        <dbReference type="ChEBI" id="CHEBI:49883"/>
    </cofactor>
    <text evidence="1">Binds 2 [4Fe-4S] clusters per subunit. One cluster is coordinated with 3 cysteines and an exchangeable S-adenosyl-L-methionine.</text>
</comment>
<comment type="pathway">
    <text evidence="1">Protein modification; protein lipoylation via endogenous pathway; protein N(6)-(lipoyl)lysine from octanoyl-[acyl-carrier-protein]: step 2/2.</text>
</comment>
<comment type="subcellular location">
    <subcellularLocation>
        <location evidence="1">Mitochondrion</location>
    </subcellularLocation>
</comment>
<comment type="miscellaneous">
    <text evidence="1">This protein may be expected to contain an N-terminal transit peptide but none has been predicted.</text>
</comment>
<comment type="similarity">
    <text evidence="1">Belongs to the radical SAM superfamily. Lipoyl synthase family.</text>
</comment>
<sequence length="393" mass="44306">MSQISSNLLRNTVQNGKFGCLKNSIQCKHTAANPLEKIRERLESGPSFQDFVQNPSYNRDDWTDYEGKLRREKGENDRLRLPPWLKTKIPMGKNFSRIKDQLRELKLATVCEEAKCPNIGECWGGGEHGTQTATIMLMGDTCTRGCRFCSVKTARVPPPLDPAEPTNTASAIASWGLDYIVLTSVDRDDLPDGGSNHIAATIREIKRQNPRIFVECLAPDFRGDLECVKVVAQSGLDVYAHNIETVEALTPFVRDRRARYRQSLDVLRSIKEINPSMITKTSIMLGLGETDEQIEQTMKDLRSVGVDCLTLGQYMQPTKRHLKVIEYVTPEKFKHWETRGNELGFLYTASGPLVRSSYKAGEFFITSILKNRAEEAERRKEAAGGQDTKTEQT</sequence>